<dbReference type="EMBL" id="AP008937">
    <property type="protein sequence ID" value="BAG27635.1"/>
    <property type="molecule type" value="Genomic_DNA"/>
</dbReference>
<dbReference type="RefSeq" id="WP_003683731.1">
    <property type="nucleotide sequence ID" value="NC_010610.1"/>
</dbReference>
<dbReference type="SMR" id="B2GDA3"/>
<dbReference type="GeneID" id="83714252"/>
<dbReference type="KEGG" id="lfe:LAF_1299"/>
<dbReference type="eggNOG" id="COG0333">
    <property type="taxonomic scope" value="Bacteria"/>
</dbReference>
<dbReference type="HOGENOM" id="CLU_129084_1_3_9"/>
<dbReference type="Proteomes" id="UP000001697">
    <property type="component" value="Chromosome"/>
</dbReference>
<dbReference type="GO" id="GO:0015934">
    <property type="term" value="C:large ribosomal subunit"/>
    <property type="evidence" value="ECO:0007669"/>
    <property type="project" value="InterPro"/>
</dbReference>
<dbReference type="GO" id="GO:0003735">
    <property type="term" value="F:structural constituent of ribosome"/>
    <property type="evidence" value="ECO:0007669"/>
    <property type="project" value="InterPro"/>
</dbReference>
<dbReference type="GO" id="GO:0006412">
    <property type="term" value="P:translation"/>
    <property type="evidence" value="ECO:0007669"/>
    <property type="project" value="UniProtKB-UniRule"/>
</dbReference>
<dbReference type="HAMAP" id="MF_00340">
    <property type="entry name" value="Ribosomal_bL32"/>
    <property type="match status" value="1"/>
</dbReference>
<dbReference type="InterPro" id="IPR002677">
    <property type="entry name" value="Ribosomal_bL32"/>
</dbReference>
<dbReference type="InterPro" id="IPR044957">
    <property type="entry name" value="Ribosomal_bL32_bact"/>
</dbReference>
<dbReference type="InterPro" id="IPR011332">
    <property type="entry name" value="Ribosomal_zn-bd"/>
</dbReference>
<dbReference type="NCBIfam" id="TIGR01031">
    <property type="entry name" value="rpmF_bact"/>
    <property type="match status" value="1"/>
</dbReference>
<dbReference type="PANTHER" id="PTHR35534">
    <property type="entry name" value="50S RIBOSOMAL PROTEIN L32"/>
    <property type="match status" value="1"/>
</dbReference>
<dbReference type="PANTHER" id="PTHR35534:SF1">
    <property type="entry name" value="LARGE RIBOSOMAL SUBUNIT PROTEIN BL32"/>
    <property type="match status" value="1"/>
</dbReference>
<dbReference type="Pfam" id="PF01783">
    <property type="entry name" value="Ribosomal_L32p"/>
    <property type="match status" value="1"/>
</dbReference>
<dbReference type="SUPFAM" id="SSF57829">
    <property type="entry name" value="Zn-binding ribosomal proteins"/>
    <property type="match status" value="1"/>
</dbReference>
<evidence type="ECO:0000255" key="1">
    <source>
        <dbReference type="HAMAP-Rule" id="MF_00340"/>
    </source>
</evidence>
<evidence type="ECO:0000305" key="2"/>
<accession>B2GDA3</accession>
<protein>
    <recommendedName>
        <fullName evidence="1">Large ribosomal subunit protein bL32</fullName>
    </recommendedName>
    <alternativeName>
        <fullName evidence="2">50S ribosomal protein L32</fullName>
    </alternativeName>
</protein>
<sequence>MAVPARKTSKTRKRNRRGHIKLTVPGLAPCPQCGELRKSHMVCPSCGYYDGKQVVENN</sequence>
<proteinExistence type="inferred from homology"/>
<reference key="1">
    <citation type="journal article" date="2008" name="DNA Res.">
        <title>Comparative genome analysis of Lactobacillus reuteri and Lactobacillus fermentum reveal a genomic island for reuterin and cobalamin production.</title>
        <authorList>
            <person name="Morita H."/>
            <person name="Toh H."/>
            <person name="Fukuda S."/>
            <person name="Horikawa H."/>
            <person name="Oshima K."/>
            <person name="Suzuki T."/>
            <person name="Murakami M."/>
            <person name="Hisamatsu S."/>
            <person name="Kato Y."/>
            <person name="Takizawa T."/>
            <person name="Fukuoka H."/>
            <person name="Yoshimura T."/>
            <person name="Itoh K."/>
            <person name="O'Sullivan D.J."/>
            <person name="McKay L.L."/>
            <person name="Ohno H."/>
            <person name="Kikuchi J."/>
            <person name="Masaoka T."/>
            <person name="Hattori M."/>
        </authorList>
    </citation>
    <scope>NUCLEOTIDE SEQUENCE [LARGE SCALE GENOMIC DNA]</scope>
    <source>
        <strain>NBRC 3956 / LMG 18251</strain>
    </source>
</reference>
<name>RL32_LIMF3</name>
<organism>
    <name type="scientific">Limosilactobacillus fermentum (strain NBRC 3956 / LMG 18251)</name>
    <name type="common">Lactobacillus fermentum</name>
    <dbReference type="NCBI Taxonomy" id="334390"/>
    <lineage>
        <taxon>Bacteria</taxon>
        <taxon>Bacillati</taxon>
        <taxon>Bacillota</taxon>
        <taxon>Bacilli</taxon>
        <taxon>Lactobacillales</taxon>
        <taxon>Lactobacillaceae</taxon>
        <taxon>Limosilactobacillus</taxon>
    </lineage>
</organism>
<gene>
    <name evidence="1" type="primary">rpmF</name>
    <name type="ordered locus">LAF_1299</name>
</gene>
<feature type="chain" id="PRO_1000120136" description="Large ribosomal subunit protein bL32">
    <location>
        <begin position="1"/>
        <end position="58"/>
    </location>
</feature>
<keyword id="KW-1185">Reference proteome</keyword>
<keyword id="KW-0687">Ribonucleoprotein</keyword>
<keyword id="KW-0689">Ribosomal protein</keyword>
<comment type="similarity">
    <text evidence="1">Belongs to the bacterial ribosomal protein bL32 family.</text>
</comment>